<dbReference type="EMBL" id="KE651168">
    <property type="protein sequence ID" value="EEB09572.1"/>
    <property type="molecule type" value="Genomic_DNA"/>
</dbReference>
<dbReference type="RefSeq" id="XP_002175865.1">
    <property type="nucleotide sequence ID" value="XM_002175829.2"/>
</dbReference>
<dbReference type="SMR" id="B6K7R8"/>
<dbReference type="STRING" id="402676.B6K7R8"/>
<dbReference type="EnsemblFungi" id="EEB09572">
    <property type="protein sequence ID" value="EEB09572"/>
    <property type="gene ID" value="SJAG_04784"/>
</dbReference>
<dbReference type="GeneID" id="7049370"/>
<dbReference type="JaponicusDB" id="SJAG_04784">
    <property type="gene designation" value="asa1"/>
</dbReference>
<dbReference type="VEuPathDB" id="FungiDB:SJAG_04784"/>
<dbReference type="eggNOG" id="KOG0322">
    <property type="taxonomic scope" value="Eukaryota"/>
</dbReference>
<dbReference type="HOGENOM" id="CLU_041940_0_1_1"/>
<dbReference type="OMA" id="WHKEGVY"/>
<dbReference type="OrthoDB" id="7668193at2759"/>
<dbReference type="Proteomes" id="UP000001744">
    <property type="component" value="Unassembled WGS sequence"/>
</dbReference>
<dbReference type="GO" id="GO:0005634">
    <property type="term" value="C:nucleus"/>
    <property type="evidence" value="ECO:0007669"/>
    <property type="project" value="UniProtKB-SubCell"/>
</dbReference>
<dbReference type="GO" id="GO:0110078">
    <property type="term" value="C:TTT Hsp90 cochaperone complex"/>
    <property type="evidence" value="ECO:0007669"/>
    <property type="project" value="EnsemblFungi"/>
</dbReference>
<dbReference type="GO" id="GO:0006325">
    <property type="term" value="P:chromatin organization"/>
    <property type="evidence" value="ECO:0007669"/>
    <property type="project" value="UniProtKB-KW"/>
</dbReference>
<dbReference type="Gene3D" id="2.130.10.10">
    <property type="entry name" value="YVTN repeat-like/Quinoprotein amine dehydrogenase"/>
    <property type="match status" value="2"/>
</dbReference>
<dbReference type="InterPro" id="IPR015943">
    <property type="entry name" value="WD40/YVTN_repeat-like_dom_sf"/>
</dbReference>
<dbReference type="InterPro" id="IPR036322">
    <property type="entry name" value="WD40_repeat_dom_sf"/>
</dbReference>
<dbReference type="InterPro" id="IPR001680">
    <property type="entry name" value="WD40_rpt"/>
</dbReference>
<dbReference type="PANTHER" id="PTHR19854:SF1">
    <property type="entry name" value="GUANINE NUCLEOTIDE-BINDING PROTEIN SUBUNIT BETA-LIKE PROTEIN 1"/>
    <property type="match status" value="1"/>
</dbReference>
<dbReference type="PANTHER" id="PTHR19854">
    <property type="entry name" value="TRANSDUCIN BETA-LIKE 3"/>
    <property type="match status" value="1"/>
</dbReference>
<dbReference type="Pfam" id="PF00400">
    <property type="entry name" value="WD40"/>
    <property type="match status" value="4"/>
</dbReference>
<dbReference type="SMART" id="SM00320">
    <property type="entry name" value="WD40"/>
    <property type="match status" value="5"/>
</dbReference>
<dbReference type="SUPFAM" id="SSF50978">
    <property type="entry name" value="WD40 repeat-like"/>
    <property type="match status" value="1"/>
</dbReference>
<dbReference type="PROSITE" id="PS50082">
    <property type="entry name" value="WD_REPEATS_2"/>
    <property type="match status" value="2"/>
</dbReference>
<dbReference type="PROSITE" id="PS50294">
    <property type="entry name" value="WD_REPEATS_REGION"/>
    <property type="match status" value="2"/>
</dbReference>
<name>ASA1_SCHJY</name>
<gene>
    <name type="primary">asa1</name>
    <name type="ORF">SJAG_04784</name>
</gene>
<feature type="chain" id="PRO_0000402220" description="ASTRA-associated protein 1">
    <location>
        <begin position="1"/>
        <end position="365"/>
    </location>
</feature>
<feature type="repeat" description="WD 1">
    <location>
        <begin position="12"/>
        <end position="50"/>
    </location>
</feature>
<feature type="repeat" description="WD 2">
    <location>
        <begin position="53"/>
        <end position="91"/>
    </location>
</feature>
<feature type="repeat" description="WD 3">
    <location>
        <begin position="188"/>
        <end position="230"/>
    </location>
</feature>
<feature type="repeat" description="WD 4">
    <location>
        <begin position="245"/>
        <end position="284"/>
    </location>
</feature>
<feature type="repeat" description="WD 5">
    <location>
        <begin position="292"/>
        <end position="330"/>
    </location>
</feature>
<feature type="repeat" description="WD 6">
    <location>
        <begin position="333"/>
        <end position="365"/>
    </location>
</feature>
<proteinExistence type="inferred from homology"/>
<accession>B6K7R8</accession>
<sequence length="365" mass="40368">MVVPTPFFVLRGHLSSVTSLSFVSDGILYSGDANGWMICWDLSVMRPTHIWRAHTKSILGVYGCSSEVVWTHGRDMQVARWHLNPPTGGSHIPLSLLHAIQQEKKNDQQSSSSLTIVSSVHKGYFFQTNNLTFCSFAISPAAGLLVVPNTVNAEQLDVYALNDTSDSDRRDNCGKRLQHALEPKPQIEKTGAVMSVALHVKYNKVVLVAGYESGHVVQYIADVDAAQKVNVYFQQVWQVMYAEKVHKEPVLSVVFGNDNGYLYSSSADDYIVRHTICLSKETHTNPESMKTGHPGQQCLRVRSDDKILVSAGWDGRGRVYGAKSLAKLAVLKYHSETCNCAAIQPGSNLIALGSKDSRISLWQIY</sequence>
<reference key="1">
    <citation type="journal article" date="2011" name="Science">
        <title>Comparative functional genomics of the fission yeasts.</title>
        <authorList>
            <person name="Rhind N."/>
            <person name="Chen Z."/>
            <person name="Yassour M."/>
            <person name="Thompson D.A."/>
            <person name="Haas B.J."/>
            <person name="Habib N."/>
            <person name="Wapinski I."/>
            <person name="Roy S."/>
            <person name="Lin M.F."/>
            <person name="Heiman D.I."/>
            <person name="Young S.K."/>
            <person name="Furuya K."/>
            <person name="Guo Y."/>
            <person name="Pidoux A."/>
            <person name="Chen H.M."/>
            <person name="Robbertse B."/>
            <person name="Goldberg J.M."/>
            <person name="Aoki K."/>
            <person name="Bayne E.H."/>
            <person name="Berlin A.M."/>
            <person name="Desjardins C.A."/>
            <person name="Dobbs E."/>
            <person name="Dukaj L."/>
            <person name="Fan L."/>
            <person name="FitzGerald M.G."/>
            <person name="French C."/>
            <person name="Gujja S."/>
            <person name="Hansen K."/>
            <person name="Keifenheim D."/>
            <person name="Levin J.Z."/>
            <person name="Mosher R.A."/>
            <person name="Mueller C.A."/>
            <person name="Pfiffner J."/>
            <person name="Priest M."/>
            <person name="Russ C."/>
            <person name="Smialowska A."/>
            <person name="Swoboda P."/>
            <person name="Sykes S.M."/>
            <person name="Vaughn M."/>
            <person name="Vengrova S."/>
            <person name="Yoder R."/>
            <person name="Zeng Q."/>
            <person name="Allshire R."/>
            <person name="Baulcombe D."/>
            <person name="Birren B.W."/>
            <person name="Brown W."/>
            <person name="Ekwall K."/>
            <person name="Kellis M."/>
            <person name="Leatherwood J."/>
            <person name="Levin H."/>
            <person name="Margalit H."/>
            <person name="Martienssen R."/>
            <person name="Nieduszynski C.A."/>
            <person name="Spatafora J.W."/>
            <person name="Friedman N."/>
            <person name="Dalgaard J.Z."/>
            <person name="Baumann P."/>
            <person name="Niki H."/>
            <person name="Regev A."/>
            <person name="Nusbaum C."/>
        </authorList>
    </citation>
    <scope>NUCLEOTIDE SEQUENCE [LARGE SCALE GENOMIC DNA]</scope>
    <source>
        <strain>yFS275 / FY16936</strain>
    </source>
</reference>
<protein>
    <recommendedName>
        <fullName>ASTRA-associated protein 1</fullName>
    </recommendedName>
</protein>
<keyword id="KW-0156">Chromatin regulator</keyword>
<keyword id="KW-0539">Nucleus</keyword>
<keyword id="KW-1185">Reference proteome</keyword>
<keyword id="KW-0677">Repeat</keyword>
<keyword id="KW-0853">WD repeat</keyword>
<evidence type="ECO:0000250" key="1"/>
<evidence type="ECO:0000305" key="2"/>
<comment type="function">
    <text evidence="1">Component of the ASTRA complex involved in chromatin remodeling.</text>
</comment>
<comment type="subunit">
    <text evidence="1">Component of the ASTRA chromatin remodeling machinery complex.</text>
</comment>
<comment type="subcellular location">
    <subcellularLocation>
        <location evidence="1">Nucleus</location>
    </subcellularLocation>
</comment>
<comment type="similarity">
    <text evidence="2">Belongs to the WD repeat ASA1 family.</text>
</comment>
<organism>
    <name type="scientific">Schizosaccharomyces japonicus (strain yFS275 / FY16936)</name>
    <name type="common">Fission yeast</name>
    <dbReference type="NCBI Taxonomy" id="402676"/>
    <lineage>
        <taxon>Eukaryota</taxon>
        <taxon>Fungi</taxon>
        <taxon>Dikarya</taxon>
        <taxon>Ascomycota</taxon>
        <taxon>Taphrinomycotina</taxon>
        <taxon>Schizosaccharomycetes</taxon>
        <taxon>Schizosaccharomycetales</taxon>
        <taxon>Schizosaccharomycetaceae</taxon>
        <taxon>Schizosaccharomyces</taxon>
    </lineage>
</organism>